<accession>Q2RGJ3</accession>
<keyword id="KW-0012">Acyltransferase</keyword>
<keyword id="KW-0963">Cytoplasm</keyword>
<keyword id="KW-0408">Iron</keyword>
<keyword id="KW-0479">Metal-binding</keyword>
<keyword id="KW-0808">Transferase</keyword>
<keyword id="KW-0819">tRNA processing</keyword>
<name>TSAD_MOOTA</name>
<reference key="1">
    <citation type="journal article" date="2008" name="Environ. Microbiol.">
        <title>The complete genome sequence of Moorella thermoacetica (f. Clostridium thermoaceticum).</title>
        <authorList>
            <person name="Pierce E."/>
            <person name="Xie G."/>
            <person name="Barabote R.D."/>
            <person name="Saunders E."/>
            <person name="Han C.S."/>
            <person name="Detter J.C."/>
            <person name="Richardson P."/>
            <person name="Brettin T.S."/>
            <person name="Das A."/>
            <person name="Ljungdahl L.G."/>
            <person name="Ragsdale S.W."/>
        </authorList>
    </citation>
    <scope>NUCLEOTIDE SEQUENCE [LARGE SCALE GENOMIC DNA]</scope>
    <source>
        <strain>ATCC 39073 / JCM 9320</strain>
    </source>
</reference>
<sequence length="342" mass="36282">MVKELATETNILAIESSCDETAAAIVSDGTRVRANIIASQIAVHRRFGGVVPEIASRHHMENIVPVVSEALATAGLAFSDVDAVAVTYGPGLVGALLVGVAYAKSLAYALGKPLIGVHHLLGHIYAGFLAYPGLPLPAVSLVVSGGHTNLVYLEDHTTRRILGSTRDDAAGEAFDKVARVLGLPYPGGPELEKLAREGNPRAIPFPRAWLEENSLDFSFSGLKSAVINYLHHARQVGQEVNRADVAASFQAAVAEVLVTKTLLAATSYRARSILLAGGVAANSVLRRELRSAGEQAGLPVFFPPRELCTDNAAMIGCAAYYQYLRRDFAPLSLNAIPDLPLN</sequence>
<protein>
    <recommendedName>
        <fullName evidence="1">tRNA N6-adenosine threonylcarbamoyltransferase</fullName>
        <ecNumber evidence="1">2.3.1.234</ecNumber>
    </recommendedName>
    <alternativeName>
        <fullName evidence="1">N6-L-threonylcarbamoyladenine synthase</fullName>
        <shortName evidence="1">t(6)A synthase</shortName>
    </alternativeName>
    <alternativeName>
        <fullName evidence="1">t(6)A37 threonylcarbamoyladenosine biosynthesis protein TsaD</fullName>
    </alternativeName>
    <alternativeName>
        <fullName evidence="1">tRNA threonylcarbamoyladenosine biosynthesis protein TsaD</fullName>
    </alternativeName>
</protein>
<dbReference type="EC" id="2.3.1.234" evidence="1"/>
<dbReference type="EMBL" id="CP000232">
    <property type="protein sequence ID" value="ABC20446.1"/>
    <property type="molecule type" value="Genomic_DNA"/>
</dbReference>
<dbReference type="RefSeq" id="YP_430989.1">
    <property type="nucleotide sequence ID" value="NC_007644.1"/>
</dbReference>
<dbReference type="SMR" id="Q2RGJ3"/>
<dbReference type="STRING" id="264732.Moth_2157"/>
<dbReference type="EnsemblBacteria" id="ABC20446">
    <property type="protein sequence ID" value="ABC20446"/>
    <property type="gene ID" value="Moth_2157"/>
</dbReference>
<dbReference type="KEGG" id="mta:Moth_2157"/>
<dbReference type="PATRIC" id="fig|264732.11.peg.2350"/>
<dbReference type="eggNOG" id="COG0533">
    <property type="taxonomic scope" value="Bacteria"/>
</dbReference>
<dbReference type="HOGENOM" id="CLU_023208_0_2_9"/>
<dbReference type="OrthoDB" id="9806197at2"/>
<dbReference type="GO" id="GO:0005737">
    <property type="term" value="C:cytoplasm"/>
    <property type="evidence" value="ECO:0007669"/>
    <property type="project" value="UniProtKB-SubCell"/>
</dbReference>
<dbReference type="GO" id="GO:0005506">
    <property type="term" value="F:iron ion binding"/>
    <property type="evidence" value="ECO:0007669"/>
    <property type="project" value="UniProtKB-UniRule"/>
</dbReference>
<dbReference type="GO" id="GO:0061711">
    <property type="term" value="F:N(6)-L-threonylcarbamoyladenine synthase activity"/>
    <property type="evidence" value="ECO:0007669"/>
    <property type="project" value="UniProtKB-EC"/>
</dbReference>
<dbReference type="GO" id="GO:0002949">
    <property type="term" value="P:tRNA threonylcarbamoyladenosine modification"/>
    <property type="evidence" value="ECO:0007669"/>
    <property type="project" value="UniProtKB-UniRule"/>
</dbReference>
<dbReference type="CDD" id="cd24133">
    <property type="entry name" value="ASKHA_NBD_TsaD_bac"/>
    <property type="match status" value="1"/>
</dbReference>
<dbReference type="FunFam" id="3.30.420.40:FF:000040">
    <property type="entry name" value="tRNA N6-adenosine threonylcarbamoyltransferase"/>
    <property type="match status" value="1"/>
</dbReference>
<dbReference type="Gene3D" id="3.30.420.40">
    <property type="match status" value="2"/>
</dbReference>
<dbReference type="HAMAP" id="MF_01445">
    <property type="entry name" value="TsaD"/>
    <property type="match status" value="1"/>
</dbReference>
<dbReference type="InterPro" id="IPR043129">
    <property type="entry name" value="ATPase_NBD"/>
</dbReference>
<dbReference type="InterPro" id="IPR000905">
    <property type="entry name" value="Gcp-like_dom"/>
</dbReference>
<dbReference type="InterPro" id="IPR017861">
    <property type="entry name" value="KAE1/TsaD"/>
</dbReference>
<dbReference type="InterPro" id="IPR017860">
    <property type="entry name" value="Peptidase_M22_CS"/>
</dbReference>
<dbReference type="InterPro" id="IPR022450">
    <property type="entry name" value="TsaD"/>
</dbReference>
<dbReference type="NCBIfam" id="TIGR00329">
    <property type="entry name" value="gcp_kae1"/>
    <property type="match status" value="1"/>
</dbReference>
<dbReference type="NCBIfam" id="TIGR03723">
    <property type="entry name" value="T6A_TsaD_YgjD"/>
    <property type="match status" value="1"/>
</dbReference>
<dbReference type="PANTHER" id="PTHR11735">
    <property type="entry name" value="TRNA N6-ADENOSINE THREONYLCARBAMOYLTRANSFERASE"/>
    <property type="match status" value="1"/>
</dbReference>
<dbReference type="PANTHER" id="PTHR11735:SF6">
    <property type="entry name" value="TRNA N6-ADENOSINE THREONYLCARBAMOYLTRANSFERASE, MITOCHONDRIAL"/>
    <property type="match status" value="1"/>
</dbReference>
<dbReference type="Pfam" id="PF00814">
    <property type="entry name" value="TsaD"/>
    <property type="match status" value="1"/>
</dbReference>
<dbReference type="PRINTS" id="PR00789">
    <property type="entry name" value="OSIALOPTASE"/>
</dbReference>
<dbReference type="SUPFAM" id="SSF53067">
    <property type="entry name" value="Actin-like ATPase domain"/>
    <property type="match status" value="2"/>
</dbReference>
<dbReference type="PROSITE" id="PS01016">
    <property type="entry name" value="GLYCOPROTEASE"/>
    <property type="match status" value="1"/>
</dbReference>
<gene>
    <name evidence="1" type="primary">tsaD</name>
    <name type="synonym">gcp</name>
    <name type="ordered locus">Moth_2157</name>
</gene>
<proteinExistence type="inferred from homology"/>
<organism>
    <name type="scientific">Moorella thermoacetica (strain ATCC 39073 / JCM 9320)</name>
    <dbReference type="NCBI Taxonomy" id="264732"/>
    <lineage>
        <taxon>Bacteria</taxon>
        <taxon>Bacillati</taxon>
        <taxon>Bacillota</taxon>
        <taxon>Clostridia</taxon>
        <taxon>Moorellales</taxon>
        <taxon>Moorellaceae</taxon>
        <taxon>Moorella</taxon>
    </lineage>
</organism>
<comment type="function">
    <text evidence="1">Required for the formation of a threonylcarbamoyl group on adenosine at position 37 (t(6)A37) in tRNAs that read codons beginning with adenine. Is involved in the transfer of the threonylcarbamoyl moiety of threonylcarbamoyl-AMP (TC-AMP) to the N6 group of A37, together with TsaE and TsaB. TsaD likely plays a direct catalytic role in this reaction.</text>
</comment>
<comment type="catalytic activity">
    <reaction evidence="1">
        <text>L-threonylcarbamoyladenylate + adenosine(37) in tRNA = N(6)-L-threonylcarbamoyladenosine(37) in tRNA + AMP + H(+)</text>
        <dbReference type="Rhea" id="RHEA:37059"/>
        <dbReference type="Rhea" id="RHEA-COMP:10162"/>
        <dbReference type="Rhea" id="RHEA-COMP:10163"/>
        <dbReference type="ChEBI" id="CHEBI:15378"/>
        <dbReference type="ChEBI" id="CHEBI:73682"/>
        <dbReference type="ChEBI" id="CHEBI:74411"/>
        <dbReference type="ChEBI" id="CHEBI:74418"/>
        <dbReference type="ChEBI" id="CHEBI:456215"/>
        <dbReference type="EC" id="2.3.1.234"/>
    </reaction>
</comment>
<comment type="cofactor">
    <cofactor evidence="1">
        <name>Fe(2+)</name>
        <dbReference type="ChEBI" id="CHEBI:29033"/>
    </cofactor>
    <text evidence="1">Binds 1 Fe(2+) ion per subunit.</text>
</comment>
<comment type="subcellular location">
    <subcellularLocation>
        <location evidence="1">Cytoplasm</location>
    </subcellularLocation>
</comment>
<comment type="similarity">
    <text evidence="1">Belongs to the KAE1 / TsaD family.</text>
</comment>
<feature type="chain" id="PRO_0000303427" description="tRNA N6-adenosine threonylcarbamoyltransferase">
    <location>
        <begin position="1"/>
        <end position="342"/>
    </location>
</feature>
<feature type="binding site" evidence="1">
    <location>
        <position position="119"/>
    </location>
    <ligand>
        <name>Fe cation</name>
        <dbReference type="ChEBI" id="CHEBI:24875"/>
    </ligand>
</feature>
<feature type="binding site" evidence="1">
    <location>
        <position position="123"/>
    </location>
    <ligand>
        <name>Fe cation</name>
        <dbReference type="ChEBI" id="CHEBI:24875"/>
    </ligand>
</feature>
<feature type="binding site" evidence="1">
    <location>
        <begin position="142"/>
        <end position="146"/>
    </location>
    <ligand>
        <name>substrate</name>
    </ligand>
</feature>
<feature type="binding site" evidence="1">
    <location>
        <position position="175"/>
    </location>
    <ligand>
        <name>substrate</name>
    </ligand>
</feature>
<feature type="binding site" evidence="1">
    <location>
        <position position="188"/>
    </location>
    <ligand>
        <name>substrate</name>
    </ligand>
</feature>
<feature type="binding site" evidence="1">
    <location>
        <position position="282"/>
    </location>
    <ligand>
        <name>substrate</name>
    </ligand>
</feature>
<feature type="binding site" evidence="1">
    <location>
        <position position="310"/>
    </location>
    <ligand>
        <name>Fe cation</name>
        <dbReference type="ChEBI" id="CHEBI:24875"/>
    </ligand>
</feature>
<evidence type="ECO:0000255" key="1">
    <source>
        <dbReference type="HAMAP-Rule" id="MF_01445"/>
    </source>
</evidence>